<sequence length="125" mass="14440">MLLSLRKNNEFRTVYRRGKSYANDLLVLYVYPNRKNVTKDGERFNKVGVSVSKKVGKSVVRSRVKRLILENYRLNSSELKEGYDFVFIARVAINGKDFKQVGKAMNNLIKKAGLRDNEKIVHSND</sequence>
<protein>
    <recommendedName>
        <fullName evidence="1">Ribonuclease P protein component</fullName>
        <shortName evidence="1">RNase P protein</shortName>
        <shortName evidence="1">RNaseP protein</shortName>
        <ecNumber evidence="1">3.1.26.5</ecNumber>
    </recommendedName>
    <alternativeName>
        <fullName evidence="1">Protein C5</fullName>
    </alternativeName>
</protein>
<name>RNPA_CLOP1</name>
<reference key="1">
    <citation type="journal article" date="2006" name="Genome Res.">
        <title>Skewed genomic variability in strains of the toxigenic bacterial pathogen, Clostridium perfringens.</title>
        <authorList>
            <person name="Myers G.S.A."/>
            <person name="Rasko D.A."/>
            <person name="Cheung J.K."/>
            <person name="Ravel J."/>
            <person name="Seshadri R."/>
            <person name="DeBoy R.T."/>
            <person name="Ren Q."/>
            <person name="Varga J."/>
            <person name="Awad M.M."/>
            <person name="Brinkac L.M."/>
            <person name="Daugherty S.C."/>
            <person name="Haft D.H."/>
            <person name="Dodson R.J."/>
            <person name="Madupu R."/>
            <person name="Nelson W.C."/>
            <person name="Rosovitz M.J."/>
            <person name="Sullivan S.A."/>
            <person name="Khouri H."/>
            <person name="Dimitrov G.I."/>
            <person name="Watkins K.L."/>
            <person name="Mulligan S."/>
            <person name="Benton J."/>
            <person name="Radune D."/>
            <person name="Fisher D.J."/>
            <person name="Atkins H.S."/>
            <person name="Hiscox T."/>
            <person name="Jost B.H."/>
            <person name="Billington S.J."/>
            <person name="Songer J.G."/>
            <person name="McClane B.A."/>
            <person name="Titball R.W."/>
            <person name="Rood J.I."/>
            <person name="Melville S.B."/>
            <person name="Paulsen I.T."/>
        </authorList>
    </citation>
    <scope>NUCLEOTIDE SEQUENCE [LARGE SCALE GENOMIC DNA]</scope>
    <source>
        <strain>ATCC 13124 / DSM 756 / JCM 1290 / NCIMB 6125 / NCTC 8237 / S 107 / Type A</strain>
    </source>
</reference>
<accession>Q0TLZ0</accession>
<proteinExistence type="inferred from homology"/>
<organism>
    <name type="scientific">Clostridium perfringens (strain ATCC 13124 / DSM 756 / JCM 1290 / NCIMB 6125 / NCTC 8237 / Type A)</name>
    <dbReference type="NCBI Taxonomy" id="195103"/>
    <lineage>
        <taxon>Bacteria</taxon>
        <taxon>Bacillati</taxon>
        <taxon>Bacillota</taxon>
        <taxon>Clostridia</taxon>
        <taxon>Eubacteriales</taxon>
        <taxon>Clostridiaceae</taxon>
        <taxon>Clostridium</taxon>
    </lineage>
</organism>
<dbReference type="EC" id="3.1.26.5" evidence="1"/>
<dbReference type="EMBL" id="CP000246">
    <property type="protein sequence ID" value="ABG82918.1"/>
    <property type="molecule type" value="Genomic_DNA"/>
</dbReference>
<dbReference type="RefSeq" id="WP_003450986.1">
    <property type="nucleotide sequence ID" value="NC_008261.1"/>
</dbReference>
<dbReference type="SMR" id="Q0TLZ0"/>
<dbReference type="STRING" id="195103.CPF_2996"/>
<dbReference type="PaxDb" id="195103-CPF_2996"/>
<dbReference type="GeneID" id="93000726"/>
<dbReference type="KEGG" id="cpf:CPF_2996"/>
<dbReference type="eggNOG" id="COG0594">
    <property type="taxonomic scope" value="Bacteria"/>
</dbReference>
<dbReference type="HOGENOM" id="CLU_117179_9_3_9"/>
<dbReference type="Proteomes" id="UP000001823">
    <property type="component" value="Chromosome"/>
</dbReference>
<dbReference type="GO" id="GO:0030677">
    <property type="term" value="C:ribonuclease P complex"/>
    <property type="evidence" value="ECO:0007669"/>
    <property type="project" value="TreeGrafter"/>
</dbReference>
<dbReference type="GO" id="GO:0042781">
    <property type="term" value="F:3'-tRNA processing endoribonuclease activity"/>
    <property type="evidence" value="ECO:0007669"/>
    <property type="project" value="TreeGrafter"/>
</dbReference>
<dbReference type="GO" id="GO:0004526">
    <property type="term" value="F:ribonuclease P activity"/>
    <property type="evidence" value="ECO:0007669"/>
    <property type="project" value="UniProtKB-UniRule"/>
</dbReference>
<dbReference type="GO" id="GO:0000049">
    <property type="term" value="F:tRNA binding"/>
    <property type="evidence" value="ECO:0007669"/>
    <property type="project" value="UniProtKB-UniRule"/>
</dbReference>
<dbReference type="GO" id="GO:0001682">
    <property type="term" value="P:tRNA 5'-leader removal"/>
    <property type="evidence" value="ECO:0007669"/>
    <property type="project" value="UniProtKB-UniRule"/>
</dbReference>
<dbReference type="Gene3D" id="3.30.230.10">
    <property type="match status" value="1"/>
</dbReference>
<dbReference type="HAMAP" id="MF_00227">
    <property type="entry name" value="RNase_P"/>
    <property type="match status" value="1"/>
</dbReference>
<dbReference type="InterPro" id="IPR020568">
    <property type="entry name" value="Ribosomal_Su5_D2-typ_SF"/>
</dbReference>
<dbReference type="InterPro" id="IPR014721">
    <property type="entry name" value="Ribsml_uS5_D2-typ_fold_subgr"/>
</dbReference>
<dbReference type="InterPro" id="IPR000100">
    <property type="entry name" value="RNase_P"/>
</dbReference>
<dbReference type="NCBIfam" id="TIGR00188">
    <property type="entry name" value="rnpA"/>
    <property type="match status" value="1"/>
</dbReference>
<dbReference type="PANTHER" id="PTHR33992">
    <property type="entry name" value="RIBONUCLEASE P PROTEIN COMPONENT"/>
    <property type="match status" value="1"/>
</dbReference>
<dbReference type="PANTHER" id="PTHR33992:SF1">
    <property type="entry name" value="RIBONUCLEASE P PROTEIN COMPONENT"/>
    <property type="match status" value="1"/>
</dbReference>
<dbReference type="Pfam" id="PF00825">
    <property type="entry name" value="Ribonuclease_P"/>
    <property type="match status" value="1"/>
</dbReference>
<dbReference type="SUPFAM" id="SSF54211">
    <property type="entry name" value="Ribosomal protein S5 domain 2-like"/>
    <property type="match status" value="1"/>
</dbReference>
<keyword id="KW-0255">Endonuclease</keyword>
<keyword id="KW-0378">Hydrolase</keyword>
<keyword id="KW-0540">Nuclease</keyword>
<keyword id="KW-0694">RNA-binding</keyword>
<keyword id="KW-0819">tRNA processing</keyword>
<feature type="chain" id="PRO_1000021399" description="Ribonuclease P protein component">
    <location>
        <begin position="1"/>
        <end position="125"/>
    </location>
</feature>
<evidence type="ECO:0000255" key="1">
    <source>
        <dbReference type="HAMAP-Rule" id="MF_00227"/>
    </source>
</evidence>
<gene>
    <name evidence="1" type="primary">rnpA</name>
    <name type="ordered locus">CPF_2996</name>
</gene>
<comment type="function">
    <text evidence="1">RNaseP catalyzes the removal of the 5'-leader sequence from pre-tRNA to produce the mature 5'-terminus. It can also cleave other RNA substrates such as 4.5S RNA. The protein component plays an auxiliary but essential role in vivo by binding to the 5'-leader sequence and broadening the substrate specificity of the ribozyme.</text>
</comment>
<comment type="catalytic activity">
    <reaction evidence="1">
        <text>Endonucleolytic cleavage of RNA, removing 5'-extranucleotides from tRNA precursor.</text>
        <dbReference type="EC" id="3.1.26.5"/>
    </reaction>
</comment>
<comment type="subunit">
    <text evidence="1">Consists of a catalytic RNA component (M1 or rnpB) and a protein subunit.</text>
</comment>
<comment type="similarity">
    <text evidence="1">Belongs to the RnpA family.</text>
</comment>